<sequence>MPTESRSILARAEETRCRHLSRLLRAGLVFLLCDVLTSCLATPELQNTVIRSSKAHHLQLLFSSRSTPAVKFPLDATLSAPNSFGEQEARSVEAVKQNPWATTTAFADFMKRFNIPQVHGSGIFVDLGRDTEGYREVGGKCPVFGKAIQMHQPAEYSNNFLDDAPTSNDASKKPLPGGFNNPQVYTSGQKFSPIDDSLLQERLGTAGPKTAIGRCALYAYSTIAVNPSTNYTSTYKYPFVYDAVSRKCYVLSVSAQLLKGEKYCSVNGTPSGLTWACFEPVKEKSSARALVYGSAFVAEGNPDAWQSACPNDAVKDALFGKWEDGQCVPFDTKTSVQSDQATNKEECWKRVFANPLVASDAPTTYPEAAQKNWNDFWPVHEQSSPKSGGFGANWANFYLEKESGETICAIFDQVPDCFAPITGAVAYTALGSSTEVNLPQCDSASFIPIEGPCNNCVQVVTECVGNQFDQTSKACCTEPEIIPPVKPPVEPPVEPPVEPPVEPPVEPPVEPPVEPPVEPPVEPPVVEPPTEPSVPEPEPPVVLPPTPGEGGGGGTSGDETVEKEGSGGNTALIAGSVLGMLIILALVGTCVGFYYRKRPLPPTERPTVEASGGREVEGPSDVAVPPDHSWWGEGEHETESLLGSRAVDAEF</sequence>
<organism>
    <name type="scientific">Toxoplasma gondii (strain ATCC 50861 / VEG)</name>
    <dbReference type="NCBI Taxonomy" id="432359"/>
    <lineage>
        <taxon>Eukaryota</taxon>
        <taxon>Sar</taxon>
        <taxon>Alveolata</taxon>
        <taxon>Apicomplexa</taxon>
        <taxon>Conoidasida</taxon>
        <taxon>Coccidia</taxon>
        <taxon>Eucoccidiorida</taxon>
        <taxon>Eimeriorina</taxon>
        <taxon>Sarcocystidae</taxon>
        <taxon>Toxoplasma</taxon>
    </lineage>
</organism>
<dbReference type="EMBL" id="AAYL02000034">
    <property type="protein sequence ID" value="ESS35318.1"/>
    <property type="molecule type" value="Genomic_DNA"/>
</dbReference>
<dbReference type="PDB" id="3ZLD">
    <property type="method" value="X-ray"/>
    <property type="resolution" value="3.10 A"/>
    <property type="chains" value="A=97-480"/>
</dbReference>
<dbReference type="PDB" id="3ZLE">
    <property type="method" value="X-ray"/>
    <property type="resolution" value="2.35 A"/>
    <property type="chains" value="A/B/C/D/E/F/G/H/I/J/K/L=97-480"/>
</dbReference>
<dbReference type="PDBsum" id="3ZLD"/>
<dbReference type="PDBsum" id="3ZLE"/>
<dbReference type="SMR" id="B6K9M7"/>
<dbReference type="STRING" id="432359.B6K9M7"/>
<dbReference type="PaxDb" id="5811-TGME49_115730"/>
<dbReference type="EnsemblProtists" id="ESS35318">
    <property type="protein sequence ID" value="ESS35318"/>
    <property type="gene ID" value="TGVEG_315730"/>
</dbReference>
<dbReference type="EnsemblProtists" id="TGME49_315730-t26_1">
    <property type="protein sequence ID" value="TGME49_315730-t26_1"/>
    <property type="gene ID" value="TGME49_315730"/>
</dbReference>
<dbReference type="VEuPathDB" id="ToxoDB:TGVEG_315730"/>
<dbReference type="eggNOG" id="ENOG502QYHG">
    <property type="taxonomic scope" value="Eukaryota"/>
</dbReference>
<dbReference type="HOGENOM" id="CLU_712722_0_0_1"/>
<dbReference type="OMA" id="ANWANFY"/>
<dbReference type="OrthoDB" id="1673at5809"/>
<dbReference type="EvolutionaryTrace" id="B6K9M7"/>
<dbReference type="Proteomes" id="UP000002226">
    <property type="component" value="Partially assembled WGS sequence"/>
</dbReference>
<dbReference type="GO" id="GO:0005576">
    <property type="term" value="C:extracellular region"/>
    <property type="evidence" value="ECO:0007669"/>
    <property type="project" value="UniProtKB-SubCell"/>
</dbReference>
<dbReference type="GO" id="GO:0005886">
    <property type="term" value="C:plasma membrane"/>
    <property type="evidence" value="ECO:0007669"/>
    <property type="project" value="UniProtKB-SubCell"/>
</dbReference>
<dbReference type="Gene3D" id="2.10.70.70">
    <property type="match status" value="1"/>
</dbReference>
<dbReference type="Gene3D" id="3.50.4.10">
    <property type="entry name" value="Hepatocyte Growth Factor"/>
    <property type="match status" value="2"/>
</dbReference>
<dbReference type="InterPro" id="IPR003298">
    <property type="entry name" value="Apmem_Ag1"/>
</dbReference>
<dbReference type="Pfam" id="PF02430">
    <property type="entry name" value="AMA-1"/>
    <property type="match status" value="1"/>
</dbReference>
<dbReference type="PRINTS" id="PR01361">
    <property type="entry name" value="MEROZOITESA"/>
</dbReference>
<dbReference type="SMART" id="SM00815">
    <property type="entry name" value="AMA-1"/>
    <property type="match status" value="1"/>
</dbReference>
<name>AMA1L_TOXGV</name>
<gene>
    <name type="ORF">TGVEG_315730</name>
</gene>
<keyword id="KW-0002">3D-structure</keyword>
<keyword id="KW-1003">Cell membrane</keyword>
<keyword id="KW-1015">Disulfide bond</keyword>
<keyword id="KW-0325">Glycoprotein</keyword>
<keyword id="KW-0472">Membrane</keyword>
<keyword id="KW-1185">Reference proteome</keyword>
<keyword id="KW-0677">Repeat</keyword>
<keyword id="KW-0964">Secreted</keyword>
<keyword id="KW-0732">Signal</keyword>
<keyword id="KW-0812">Transmembrane</keyword>
<keyword id="KW-1133">Transmembrane helix</keyword>
<feature type="signal peptide" evidence="2">
    <location>
        <begin position="1"/>
        <end position="41"/>
    </location>
</feature>
<feature type="propeptide" id="PRO_0000421956" description="Removed in mature form" evidence="1">
    <location>
        <begin position="42"/>
        <end position="81"/>
    </location>
</feature>
<feature type="chain" id="PRO_0000421957" description="Apical membrane antigen 1-like protein">
    <location>
        <begin position="82"/>
        <end position="651"/>
    </location>
</feature>
<feature type="chain" id="PRO_0000421958" description="Apical membrane antigen 1-like protein, soluble form">
    <location>
        <begin position="82"/>
        <end position="574"/>
    </location>
</feature>
<feature type="topological domain" description="Extracellular" evidence="2">
    <location>
        <begin position="42"/>
        <end position="570"/>
    </location>
</feature>
<feature type="transmembrane region" description="Helical" evidence="2">
    <location>
        <begin position="571"/>
        <end position="591"/>
    </location>
</feature>
<feature type="topological domain" description="Cytoplasmic" evidence="2">
    <location>
        <begin position="592"/>
        <end position="651"/>
    </location>
</feature>
<feature type="repeat" description="1; approximate">
    <location>
        <begin position="483"/>
        <end position="486"/>
    </location>
</feature>
<feature type="repeat" description="2">
    <location>
        <begin position="487"/>
        <end position="490"/>
    </location>
</feature>
<feature type="repeat" description="3">
    <location>
        <begin position="491"/>
        <end position="494"/>
    </location>
</feature>
<feature type="repeat" description="4">
    <location>
        <begin position="495"/>
        <end position="498"/>
    </location>
</feature>
<feature type="repeat" description="5">
    <location>
        <begin position="499"/>
        <end position="502"/>
    </location>
</feature>
<feature type="repeat" description="6">
    <location>
        <begin position="503"/>
        <end position="506"/>
    </location>
</feature>
<feature type="repeat" description="7">
    <location>
        <begin position="507"/>
        <end position="510"/>
    </location>
</feature>
<feature type="repeat" description="8">
    <location>
        <begin position="511"/>
        <end position="514"/>
    </location>
</feature>
<feature type="repeat" description="9">
    <location>
        <begin position="515"/>
        <end position="518"/>
    </location>
</feature>
<feature type="repeat" description="10">
    <location>
        <begin position="519"/>
        <end position="522"/>
    </location>
</feature>
<feature type="repeat" description="11; approximate">
    <location>
        <begin position="523"/>
        <end position="527"/>
    </location>
</feature>
<feature type="repeat" description="12; approximate">
    <location>
        <begin position="528"/>
        <end position="531"/>
    </location>
</feature>
<feature type="region of interest" description="Disordered" evidence="3">
    <location>
        <begin position="483"/>
        <end position="567"/>
    </location>
</feature>
<feature type="region of interest" description="12 x 4 AA approximate tandem-repeats of P-P-V-E">
    <location>
        <begin position="483"/>
        <end position="531"/>
    </location>
</feature>
<feature type="region of interest" description="Disordered" evidence="3">
    <location>
        <begin position="598"/>
        <end position="651"/>
    </location>
</feature>
<feature type="compositionally biased region" description="Pro residues" evidence="3">
    <location>
        <begin position="483"/>
        <end position="547"/>
    </location>
</feature>
<feature type="site" description="Cleavage; by rhomboid-like protease" evidence="1">
    <location>
        <begin position="574"/>
        <end position="575"/>
    </location>
</feature>
<feature type="glycosylation site" description="N-linked (GlcNAc...) asparagine" evidence="2">
    <location>
        <position position="230"/>
    </location>
</feature>
<feature type="disulfide bond" evidence="1">
    <location>
        <begin position="141"/>
        <end position="309"/>
    </location>
</feature>
<feature type="disulfide bond" evidence="1">
    <location>
        <begin position="215"/>
        <end position="248"/>
    </location>
</feature>
<feature type="disulfide bond" evidence="1">
    <location>
        <begin position="264"/>
        <end position="277"/>
    </location>
</feature>
<feature type="disulfide bond" evidence="1">
    <location>
        <begin position="327"/>
        <end position="417"/>
    </location>
</feature>
<feature type="disulfide bond" evidence="1">
    <location>
        <begin position="347"/>
        <end position="408"/>
    </location>
</feature>
<feature type="disulfide bond" evidence="1">
    <location>
        <begin position="441"/>
        <end position="463"/>
    </location>
</feature>
<feature type="disulfide bond" evidence="1">
    <location>
        <begin position="453"/>
        <end position="475"/>
    </location>
</feature>
<feature type="helix" evidence="8">
    <location>
        <begin position="99"/>
        <end position="101"/>
    </location>
</feature>
<feature type="helix" evidence="8">
    <location>
        <begin position="104"/>
        <end position="111"/>
    </location>
</feature>
<feature type="helix" evidence="8">
    <location>
        <begin position="115"/>
        <end position="118"/>
    </location>
</feature>
<feature type="strand" evidence="8">
    <location>
        <begin position="123"/>
        <end position="125"/>
    </location>
</feature>
<feature type="strand" evidence="8">
    <location>
        <begin position="129"/>
        <end position="131"/>
    </location>
</feature>
<feature type="strand" evidence="8">
    <location>
        <begin position="134"/>
        <end position="136"/>
    </location>
</feature>
<feature type="strand" evidence="8">
    <location>
        <begin position="146"/>
        <end position="150"/>
    </location>
</feature>
<feature type="strand" evidence="8">
    <location>
        <begin position="172"/>
        <end position="174"/>
    </location>
</feature>
<feature type="strand" evidence="7">
    <location>
        <begin position="183"/>
        <end position="185"/>
    </location>
</feature>
<feature type="strand" evidence="8">
    <location>
        <begin position="190"/>
        <end position="195"/>
    </location>
</feature>
<feature type="helix" evidence="8">
    <location>
        <begin position="196"/>
        <end position="203"/>
    </location>
</feature>
<feature type="strand" evidence="7">
    <location>
        <begin position="205"/>
        <end position="207"/>
    </location>
</feature>
<feature type="helix" evidence="8">
    <location>
        <begin position="211"/>
        <end position="220"/>
    </location>
</feature>
<feature type="strand" evidence="7">
    <location>
        <begin position="223"/>
        <end position="226"/>
    </location>
</feature>
<feature type="turn" evidence="8">
    <location>
        <begin position="227"/>
        <end position="229"/>
    </location>
</feature>
<feature type="strand" evidence="8">
    <location>
        <begin position="239"/>
        <end position="242"/>
    </location>
</feature>
<feature type="turn" evidence="8">
    <location>
        <begin position="243"/>
        <end position="246"/>
    </location>
</feature>
<feature type="strand" evidence="8">
    <location>
        <begin position="247"/>
        <end position="252"/>
    </location>
</feature>
<feature type="turn" evidence="8">
    <location>
        <begin position="261"/>
        <end position="263"/>
    </location>
</feature>
<feature type="strand" evidence="8">
    <location>
        <begin position="269"/>
        <end position="271"/>
    </location>
</feature>
<feature type="strand" evidence="8">
    <location>
        <begin position="274"/>
        <end position="276"/>
    </location>
</feature>
<feature type="strand" evidence="8">
    <location>
        <begin position="278"/>
        <end position="282"/>
    </location>
</feature>
<feature type="strand" evidence="8">
    <location>
        <begin position="290"/>
        <end position="293"/>
    </location>
</feature>
<feature type="helix" evidence="8">
    <location>
        <begin position="295"/>
        <end position="298"/>
    </location>
</feature>
<feature type="turn" evidence="8">
    <location>
        <begin position="302"/>
        <end position="304"/>
    </location>
</feature>
<feature type="helix" evidence="8">
    <location>
        <begin position="305"/>
        <end position="308"/>
    </location>
</feature>
<feature type="strand" evidence="8">
    <location>
        <begin position="312"/>
        <end position="323"/>
    </location>
</feature>
<feature type="strand" evidence="8">
    <location>
        <begin position="326"/>
        <end position="329"/>
    </location>
</feature>
<feature type="helix" evidence="8">
    <location>
        <begin position="332"/>
        <end position="334"/>
    </location>
</feature>
<feature type="strand" evidence="8">
    <location>
        <begin position="336"/>
        <end position="340"/>
    </location>
</feature>
<feature type="helix" evidence="8">
    <location>
        <begin position="344"/>
        <end position="353"/>
    </location>
</feature>
<feature type="strand" evidence="8">
    <location>
        <begin position="394"/>
        <end position="399"/>
    </location>
</feature>
<feature type="turn" evidence="8">
    <location>
        <begin position="401"/>
        <end position="403"/>
    </location>
</feature>
<feature type="strand" evidence="8">
    <location>
        <begin position="406"/>
        <end position="411"/>
    </location>
</feature>
<feature type="strand" evidence="8">
    <location>
        <begin position="417"/>
        <end position="431"/>
    </location>
</feature>
<feature type="turn" evidence="8">
    <location>
        <begin position="443"/>
        <end position="445"/>
    </location>
</feature>
<feature type="strand" evidence="8">
    <location>
        <begin position="457"/>
        <end position="464"/>
    </location>
</feature>
<feature type="strand" evidence="8">
    <location>
        <begin position="467"/>
        <end position="474"/>
    </location>
</feature>
<evidence type="ECO:0000250" key="1"/>
<evidence type="ECO:0000255" key="2"/>
<evidence type="ECO:0000256" key="3">
    <source>
        <dbReference type="SAM" id="MobiDB-lite"/>
    </source>
</evidence>
<evidence type="ECO:0000269" key="4">
    <source>
    </source>
</evidence>
<evidence type="ECO:0000269" key="5">
    <source>
    </source>
</evidence>
<evidence type="ECO:0000305" key="6"/>
<evidence type="ECO:0007829" key="7">
    <source>
        <dbReference type="PDB" id="3ZLD"/>
    </source>
</evidence>
<evidence type="ECO:0007829" key="8">
    <source>
        <dbReference type="PDB" id="3ZLE"/>
    </source>
</evidence>
<comment type="function">
    <text evidence="1">May play a role in host cell invasion.</text>
</comment>
<comment type="subcellular location">
    <subcellularLocation>
        <location evidence="1">Cell membrane</location>
        <topology evidence="6">Single-pass type I membrane protein</topology>
    </subcellularLocation>
    <subcellularLocation>
        <location evidence="1">Secreted</location>
    </subcellularLocation>
    <text evidence="1">Initially localizes to micronemes, specialized secretory organelles of apicomplexan parasites important for host cell invasion. Relocalizes to the surface membrane upon host invasion.</text>
</comment>
<comment type="induction">
    <text evidence="4 5">Readily detected in oocysts (at protein level). Specifically up-regulated in sporozoites, but not in tachyzoites and bradyzoites.</text>
</comment>
<comment type="PTM">
    <text evidence="1">Proteolytically cleaved within its transmembrane domain, releasing a soluble form from the cell surface.</text>
</comment>
<comment type="similarity">
    <text evidence="6">Belongs to the apicomplexan parasites AMA1 family.</text>
</comment>
<protein>
    <recommendedName>
        <fullName>Apical membrane antigen 1-like protein</fullName>
        <shortName>SporoAMA1</shortName>
    </recommendedName>
    <component>
        <recommendedName>
            <fullName>Apical membrane antigen 1-like protein, soluble form</fullName>
        </recommendedName>
    </component>
</protein>
<proteinExistence type="evidence at protein level"/>
<accession>B6K9M7</accession>
<accession>B9QA70</accession>
<accession>V4ZJL7</accession>
<reference key="1">
    <citation type="submission" date="2008-03" db="EMBL/GenBank/DDBJ databases">
        <title>Annotation of Toxoplasma gondii VEG.</title>
        <authorList>
            <person name="Lorenzi H."/>
            <person name="Inman J."/>
            <person name="Amedeo P."/>
            <person name="Brunk B."/>
            <person name="Roos D."/>
            <person name="Caler E."/>
        </authorList>
    </citation>
    <scope>NUCLEOTIDE SEQUENCE [LARGE SCALE GENOMIC DNA]</scope>
    <source>
        <strain>ATCC 50861 / VEG</strain>
    </source>
</reference>
<reference key="2">
    <citation type="journal article" date="2012" name="PLoS ONE">
        <title>Proteomic analysis of fractionated Toxoplasma oocysts reveals clues to their environmental resistance.</title>
        <authorList>
            <person name="Fritz H.M."/>
            <person name="Bowyer P.W."/>
            <person name="Bogyo M."/>
            <person name="Conrad P.A."/>
            <person name="Boothroyd J.C."/>
        </authorList>
    </citation>
    <scope>IDENTIFICATION BY MASS SPECTROMETRY</scope>
    <scope>INDUCTION</scope>
</reference>
<reference key="3">
    <citation type="journal article" date="2012" name="PLoS ONE">
        <title>Transcriptomic analysis of toxoplasma development reveals many novel functions and structures specific to sporozoites and oocysts.</title>
        <authorList>
            <person name="Fritz H.M."/>
            <person name="Buchholz K.R."/>
            <person name="Chen X."/>
            <person name="Durbin-Johnson B."/>
            <person name="Rocke D.M."/>
            <person name="Conrad P.A."/>
            <person name="Boothroyd J.C."/>
        </authorList>
    </citation>
    <scope>INDUCTION</scope>
</reference>